<feature type="chain" id="PRO_1000147434" description="Photosystem II reaction center protein Z">
    <location>
        <begin position="1"/>
        <end position="62"/>
    </location>
</feature>
<feature type="transmembrane region" description="Helical" evidence="1">
    <location>
        <begin position="8"/>
        <end position="28"/>
    </location>
</feature>
<feature type="transmembrane region" description="Helical" evidence="1">
    <location>
        <begin position="41"/>
        <end position="61"/>
    </location>
</feature>
<name>PSBZ_CYAP4</name>
<evidence type="ECO:0000255" key="1">
    <source>
        <dbReference type="HAMAP-Rule" id="MF_00644"/>
    </source>
</evidence>
<gene>
    <name evidence="1" type="primary">psbZ</name>
    <name type="ordered locus">Cyan7425_2568</name>
</gene>
<keyword id="KW-0472">Membrane</keyword>
<keyword id="KW-0602">Photosynthesis</keyword>
<keyword id="KW-0604">Photosystem II</keyword>
<keyword id="KW-0674">Reaction center</keyword>
<keyword id="KW-0793">Thylakoid</keyword>
<keyword id="KW-0812">Transmembrane</keyword>
<keyword id="KW-1133">Transmembrane helix</keyword>
<accession>B8HYC0</accession>
<dbReference type="EMBL" id="CP001344">
    <property type="protein sequence ID" value="ACL44923.1"/>
    <property type="molecule type" value="Genomic_DNA"/>
</dbReference>
<dbReference type="SMR" id="B8HYC0"/>
<dbReference type="STRING" id="395961.Cyan7425_2568"/>
<dbReference type="KEGG" id="cyn:Cyan7425_2568"/>
<dbReference type="eggNOG" id="ENOG5032ZB0">
    <property type="taxonomic scope" value="Bacteria"/>
</dbReference>
<dbReference type="HOGENOM" id="CLU_195286_1_0_3"/>
<dbReference type="OrthoDB" id="490783at2"/>
<dbReference type="GO" id="GO:0009539">
    <property type="term" value="C:photosystem II reaction center"/>
    <property type="evidence" value="ECO:0007669"/>
    <property type="project" value="InterPro"/>
</dbReference>
<dbReference type="GO" id="GO:0031676">
    <property type="term" value="C:plasma membrane-derived thylakoid membrane"/>
    <property type="evidence" value="ECO:0007669"/>
    <property type="project" value="UniProtKB-SubCell"/>
</dbReference>
<dbReference type="GO" id="GO:0015979">
    <property type="term" value="P:photosynthesis"/>
    <property type="evidence" value="ECO:0007669"/>
    <property type="project" value="UniProtKB-UniRule"/>
</dbReference>
<dbReference type="GO" id="GO:0042549">
    <property type="term" value="P:photosystem II stabilization"/>
    <property type="evidence" value="ECO:0007669"/>
    <property type="project" value="InterPro"/>
</dbReference>
<dbReference type="Gene3D" id="1.10.287.740">
    <property type="entry name" value="Photosystem II PsbZ, reaction centre"/>
    <property type="match status" value="1"/>
</dbReference>
<dbReference type="HAMAP" id="MF_00644">
    <property type="entry name" value="PSII_PsbZ"/>
    <property type="match status" value="1"/>
</dbReference>
<dbReference type="InterPro" id="IPR002644">
    <property type="entry name" value="PSII_PsbZ"/>
</dbReference>
<dbReference type="InterPro" id="IPR036512">
    <property type="entry name" value="PSII_PsbZ_sf"/>
</dbReference>
<dbReference type="NCBIfam" id="TIGR03043">
    <property type="entry name" value="PS_II_psbZ"/>
    <property type="match status" value="1"/>
</dbReference>
<dbReference type="PANTHER" id="PTHR34971">
    <property type="entry name" value="PHOTOSYSTEM II REACTION CENTER PROTEIN Z"/>
    <property type="match status" value="1"/>
</dbReference>
<dbReference type="PANTHER" id="PTHR34971:SF2">
    <property type="entry name" value="PHOTOSYSTEM II REACTION CENTER PROTEIN Z"/>
    <property type="match status" value="1"/>
</dbReference>
<dbReference type="Pfam" id="PF01737">
    <property type="entry name" value="Ycf9"/>
    <property type="match status" value="1"/>
</dbReference>
<dbReference type="SUPFAM" id="SSF161055">
    <property type="entry name" value="PsbZ-like"/>
    <property type="match status" value="1"/>
</dbReference>
<comment type="function">
    <text evidence="1">May control the interaction of photosystem II (PSII) cores with the light-harvesting antenna, regulates electron flow through the 2 photosystem reaction centers. PSII is a light-driven water plastoquinone oxidoreductase, using light energy to abstract electrons from H(2)O, generating a proton gradient subsequently used for ATP formation.</text>
</comment>
<comment type="subunit">
    <text evidence="1">PSII is composed of 1 copy each of membrane proteins PsbA, PsbB, PsbC, PsbD, PsbE, PsbF, PsbH, PsbI, PsbJ, PsbK, PsbL, PsbM, PsbT, PsbX, PsbY, PsbZ, Psb30/Ycf12, peripheral proteins PsbO, CyanoQ (PsbQ), PsbU, PsbV and a large number of cofactors. It forms dimeric complexes.</text>
</comment>
<comment type="subcellular location">
    <subcellularLocation>
        <location evidence="1">Cellular thylakoid membrane</location>
        <topology evidence="1">Multi-pass membrane protein</topology>
    </subcellularLocation>
</comment>
<comment type="similarity">
    <text evidence="1">Belongs to the PsbZ family.</text>
</comment>
<sequence length="62" mass="6652">MTFLFQLALAALVILSFAMIVGVPVAYASPQNWDSSKRLIFLGSGVWIGLVLVVAALNFLVV</sequence>
<reference key="1">
    <citation type="journal article" date="2011" name="MBio">
        <title>Novel metabolic attributes of the genus Cyanothece, comprising a group of unicellular nitrogen-fixing Cyanobacteria.</title>
        <authorList>
            <person name="Bandyopadhyay A."/>
            <person name="Elvitigala T."/>
            <person name="Welsh E."/>
            <person name="Stockel J."/>
            <person name="Liberton M."/>
            <person name="Min H."/>
            <person name="Sherman L.A."/>
            <person name="Pakrasi H.B."/>
        </authorList>
    </citation>
    <scope>NUCLEOTIDE SEQUENCE [LARGE SCALE GENOMIC DNA]</scope>
    <source>
        <strain>PCC 7425 / ATCC 29141</strain>
    </source>
</reference>
<protein>
    <recommendedName>
        <fullName evidence="1">Photosystem II reaction center protein Z</fullName>
        <shortName evidence="1">PSII-Z</shortName>
    </recommendedName>
</protein>
<proteinExistence type="inferred from homology"/>
<organism>
    <name type="scientific">Cyanothece sp. (strain PCC 7425 / ATCC 29141)</name>
    <dbReference type="NCBI Taxonomy" id="395961"/>
    <lineage>
        <taxon>Bacteria</taxon>
        <taxon>Bacillati</taxon>
        <taxon>Cyanobacteriota</taxon>
        <taxon>Cyanophyceae</taxon>
        <taxon>Gomontiellales</taxon>
        <taxon>Cyanothecaceae</taxon>
        <taxon>Cyanothece</taxon>
    </lineage>
</organism>